<feature type="chain" id="PRO_0000192855" description="Casein kinase 1-like protein 1">
    <location>
        <begin position="1"/>
        <end position="450"/>
    </location>
</feature>
<feature type="domain" description="Protein kinase" evidence="2">
    <location>
        <begin position="9"/>
        <end position="278"/>
    </location>
</feature>
<feature type="region of interest" description="Disordered" evidence="4">
    <location>
        <begin position="311"/>
        <end position="450"/>
    </location>
</feature>
<feature type="compositionally biased region" description="Basic and acidic residues" evidence="4">
    <location>
        <begin position="328"/>
        <end position="342"/>
    </location>
</feature>
<feature type="compositionally biased region" description="Polar residues" evidence="4">
    <location>
        <begin position="349"/>
        <end position="365"/>
    </location>
</feature>
<feature type="compositionally biased region" description="Low complexity" evidence="4">
    <location>
        <begin position="371"/>
        <end position="382"/>
    </location>
</feature>
<feature type="active site" description="Proton acceptor" evidence="2 3">
    <location>
        <position position="128"/>
    </location>
</feature>
<feature type="binding site" evidence="2">
    <location>
        <begin position="15"/>
        <end position="23"/>
    </location>
    <ligand>
        <name>ATP</name>
        <dbReference type="ChEBI" id="CHEBI:30616"/>
    </ligand>
</feature>
<feature type="binding site" evidence="2">
    <location>
        <position position="38"/>
    </location>
    <ligand>
        <name>ATP</name>
        <dbReference type="ChEBI" id="CHEBI:30616"/>
    </ligand>
</feature>
<feature type="sequence conflict" description="In Ref. 1; AAA50233." evidence="9" ref="1">
    <original>P</original>
    <variation>Q</variation>
    <location>
        <position position="47"/>
    </location>
</feature>
<feature type="sequence conflict" description="In Ref. 1; AAA50233." evidence="9" ref="1">
    <original>PD</original>
    <variation>QT</variation>
    <location>
        <begin position="131"/>
        <end position="132"/>
    </location>
</feature>
<feature type="sequence conflict" description="In Ref. 1; AAA50233." evidence="9" ref="1">
    <original>S</original>
    <variation>M</variation>
    <location>
        <position position="159"/>
    </location>
</feature>
<feature type="sequence conflict" description="In Ref. 1; AAA50233." evidence="9" ref="1">
    <original>E</original>
    <variation>K</variation>
    <location>
        <position position="197"/>
    </location>
</feature>
<feature type="sequence conflict" description="In Ref. 1; AAA50233." evidence="9" ref="1">
    <original>Q</original>
    <variation>K</variation>
    <location>
        <position position="223"/>
    </location>
</feature>
<feature type="sequence conflict" description="In Ref. 1; AAA50233." evidence="9" ref="1">
    <original>C</original>
    <variation>CPIEALC</variation>
    <location>
        <position position="241"/>
    </location>
</feature>
<feature type="sequence conflict" description="In Ref. 1; AAA50233." evidence="9" ref="1">
    <original>M</original>
    <variation>T</variation>
    <location>
        <position position="338"/>
    </location>
</feature>
<feature type="sequence conflict" description="In Ref. 1; AAA50233." evidence="9" ref="1">
    <original>A</original>
    <variation>V</variation>
    <location>
        <position position="387"/>
    </location>
</feature>
<feature type="sequence conflict" description="In Ref. 1; AAA50233." evidence="9" ref="1">
    <original>EE</original>
    <variation>GG</variation>
    <location>
        <begin position="399"/>
        <end position="400"/>
    </location>
</feature>
<accession>P42158</accession>
<accession>Q3KT07</accession>
<accession>Q9SZI1</accession>
<protein>
    <recommendedName>
        <fullName evidence="9">Casein kinase 1-like protein 1</fullName>
        <ecNumber evidence="9">2.7.11.1</ecNumber>
    </recommendedName>
    <alternativeName>
        <fullName evidence="8">Casein kinase 1</fullName>
    </alternativeName>
    <alternativeName>
        <fullName evidence="9">Casein kinase I isoform delta-like</fullName>
        <shortName evidence="9">CKI-delta</shortName>
    </alternativeName>
    <alternativeName>
        <fullName evidence="7">Protein CASEIN KINASE I-LIKE 1</fullName>
    </alternativeName>
</protein>
<name>CKL1_ARATH</name>
<sequence length="450" mass="50947">MEPRVGNKFRLGRKIGSGSFGEIYLGTNIHTNEELAIKLENVKTKHPQLLYESKLYRILQGGTGVPNVKWFGVEGDYNVLVMDLLGPSLEDLFNFCSRKLSLKSVLMLADQMINRVEFFHSKSFLHRDLKPDNFLMGLGRRANQVYIIDFGLAKKYRDSTTHQHIPYRENKNLTGTARYASMNTHLGIEQSRRDDLESLGYILMYFLKGSLPWQGLKAGTKKQKYERISEKKVSTSIEALCRGYPSEFASYFHYCRSLRFDDKPDYAYLKRIFRDLFIREGFQFDYVFDWTILKYQQSQLTAPPSRALNPAVGTSAALPPGISNIDRYTGEEEGRPHMESSRRRVSGALDNSGNISNQPTSSSARDSMIPSSSLFAQSAGSSRRVTAVSGSRDNFPGSEELLQRSRTGDVSRGVIPRNSPGEAGKSTRRHYESVVKGIDNLQVSDEHHPH</sequence>
<organism>
    <name type="scientific">Arabidopsis thaliana</name>
    <name type="common">Mouse-ear cress</name>
    <dbReference type="NCBI Taxonomy" id="3702"/>
    <lineage>
        <taxon>Eukaryota</taxon>
        <taxon>Viridiplantae</taxon>
        <taxon>Streptophyta</taxon>
        <taxon>Embryophyta</taxon>
        <taxon>Tracheophyta</taxon>
        <taxon>Spermatophyta</taxon>
        <taxon>Magnoliopsida</taxon>
        <taxon>eudicotyledons</taxon>
        <taxon>Gunneridae</taxon>
        <taxon>Pentapetalae</taxon>
        <taxon>rosids</taxon>
        <taxon>malvids</taxon>
        <taxon>Brassicales</taxon>
        <taxon>Brassicaceae</taxon>
        <taxon>Camelineae</taxon>
        <taxon>Arabidopsis</taxon>
    </lineage>
</organism>
<gene>
    <name evidence="7" type="primary">CKL1</name>
    <name evidence="8" type="synonym">CK1</name>
    <name evidence="9" type="synonym">CKI6</name>
    <name type="ordered locus">At4g26100</name>
    <name type="ORF">F20B18.210</name>
</gene>
<comment type="function">
    <text evidence="1">Casein kinases are operationally defined by their preferential utilization of acidic proteins such as caseins as substrates. It can phosphorylate a large number of proteins.</text>
</comment>
<comment type="catalytic activity">
    <reaction evidence="9">
        <text>L-seryl-[protein] + ATP = O-phospho-L-seryl-[protein] + ADP + H(+)</text>
        <dbReference type="Rhea" id="RHEA:17989"/>
        <dbReference type="Rhea" id="RHEA-COMP:9863"/>
        <dbReference type="Rhea" id="RHEA-COMP:11604"/>
        <dbReference type="ChEBI" id="CHEBI:15378"/>
        <dbReference type="ChEBI" id="CHEBI:29999"/>
        <dbReference type="ChEBI" id="CHEBI:30616"/>
        <dbReference type="ChEBI" id="CHEBI:83421"/>
        <dbReference type="ChEBI" id="CHEBI:456216"/>
        <dbReference type="EC" id="2.7.11.1"/>
    </reaction>
</comment>
<comment type="catalytic activity">
    <reaction evidence="9">
        <text>L-threonyl-[protein] + ATP = O-phospho-L-threonyl-[protein] + ADP + H(+)</text>
        <dbReference type="Rhea" id="RHEA:46608"/>
        <dbReference type="Rhea" id="RHEA-COMP:11060"/>
        <dbReference type="Rhea" id="RHEA-COMP:11605"/>
        <dbReference type="ChEBI" id="CHEBI:15378"/>
        <dbReference type="ChEBI" id="CHEBI:30013"/>
        <dbReference type="ChEBI" id="CHEBI:30616"/>
        <dbReference type="ChEBI" id="CHEBI:61977"/>
        <dbReference type="ChEBI" id="CHEBI:456216"/>
        <dbReference type="EC" id="2.7.11.1"/>
    </reaction>
</comment>
<comment type="subunit">
    <text evidence="1">Monomer.</text>
</comment>
<comment type="subcellular location">
    <subcellularLocation>
        <location evidence="1">Cytoplasm</location>
    </subcellularLocation>
    <subcellularLocation>
        <location evidence="6">Cell junction</location>
        <location evidence="6">Plasmodesma</location>
    </subcellularLocation>
    <text evidence="6">Present in punctate particles with granular structure.</text>
</comment>
<comment type="tissue specificity">
    <text evidence="5">Expressed in flowers.</text>
</comment>
<comment type="PTM">
    <text evidence="1">Autophosphorylated.</text>
</comment>
<comment type="similarity">
    <text evidence="9">Belongs to the protein kinase superfamily. CK1 Ser/Thr protein kinase family. Casein kinase I subfamily.</text>
</comment>
<comment type="sequence caution" evidence="9">
    <conflict type="frameshift">
        <sequence resource="EMBL-CDS" id="AAA50233"/>
    </conflict>
</comment>
<evidence type="ECO:0000250" key="1">
    <source>
        <dbReference type="UniProtKB" id="P48730"/>
    </source>
</evidence>
<evidence type="ECO:0000255" key="2">
    <source>
        <dbReference type="PROSITE-ProRule" id="PRU00159"/>
    </source>
</evidence>
<evidence type="ECO:0000255" key="3">
    <source>
        <dbReference type="PROSITE-ProRule" id="PRU10027"/>
    </source>
</evidence>
<evidence type="ECO:0000256" key="4">
    <source>
        <dbReference type="SAM" id="MobiDB-lite"/>
    </source>
</evidence>
<evidence type="ECO:0000269" key="5">
    <source>
    </source>
</evidence>
<evidence type="ECO:0000269" key="6">
    <source>
    </source>
</evidence>
<evidence type="ECO:0000303" key="7">
    <source>
    </source>
</evidence>
<evidence type="ECO:0000303" key="8">
    <source>
    </source>
</evidence>
<evidence type="ECO:0000305" key="9"/>
<keyword id="KW-0067">ATP-binding</keyword>
<keyword id="KW-0965">Cell junction</keyword>
<keyword id="KW-0963">Cytoplasm</keyword>
<keyword id="KW-0418">Kinase</keyword>
<keyword id="KW-0547">Nucleotide-binding</keyword>
<keyword id="KW-0597">Phosphoprotein</keyword>
<keyword id="KW-1185">Reference proteome</keyword>
<keyword id="KW-0723">Serine/threonine-protein kinase</keyword>
<keyword id="KW-0808">Transferase</keyword>
<reference key="1">
    <citation type="journal article" date="1994" name="Cell">
        <title>The A. thaliana disease resistance gene RPS2 encodes a protein containing a nucleotide-binding site and leucine-rich repeats.</title>
        <authorList>
            <person name="Mindrinos M."/>
            <person name="Katagiri F."/>
            <person name="Yu G.-L."/>
            <person name="Ausubel F.M."/>
        </authorList>
    </citation>
    <scope>NUCLEOTIDE SEQUENCE [MRNA]</scope>
    <source>
        <strain>cv. Columbia</strain>
        <tissue>Leaf</tissue>
    </source>
</reference>
<reference key="2">
    <citation type="journal article" date="2005" name="Plant Cell">
        <title>Plasmodesmal-associated protein kinase in tobacco and Arabidopsis recognizes a subset of non-cell-autonomous proteins.</title>
        <authorList>
            <person name="Lee J.-Y."/>
            <person name="Taoka K."/>
            <person name="Yoo B.-C."/>
            <person name="Ben-Nissan G."/>
            <person name="Kim D.-J."/>
            <person name="Lucas W.J."/>
        </authorList>
    </citation>
    <scope>NUCLEOTIDE SEQUENCE [MRNA]</scope>
    <scope>SUBCELLULAR LOCATION</scope>
</reference>
<reference key="3">
    <citation type="journal article" date="1999" name="Nature">
        <title>Sequence and analysis of chromosome 4 of the plant Arabidopsis thaliana.</title>
        <authorList>
            <person name="Mayer K.F.X."/>
            <person name="Schueller C."/>
            <person name="Wambutt R."/>
            <person name="Murphy G."/>
            <person name="Volckaert G."/>
            <person name="Pohl T."/>
            <person name="Duesterhoeft A."/>
            <person name="Stiekema W."/>
            <person name="Entian K.-D."/>
            <person name="Terryn N."/>
            <person name="Harris B."/>
            <person name="Ansorge W."/>
            <person name="Brandt P."/>
            <person name="Grivell L.A."/>
            <person name="Rieger M."/>
            <person name="Weichselgartner M."/>
            <person name="de Simone V."/>
            <person name="Obermaier B."/>
            <person name="Mache R."/>
            <person name="Mueller M."/>
            <person name="Kreis M."/>
            <person name="Delseny M."/>
            <person name="Puigdomenech P."/>
            <person name="Watson M."/>
            <person name="Schmidtheini T."/>
            <person name="Reichert B."/>
            <person name="Portetelle D."/>
            <person name="Perez-Alonso M."/>
            <person name="Boutry M."/>
            <person name="Bancroft I."/>
            <person name="Vos P."/>
            <person name="Hoheisel J."/>
            <person name="Zimmermann W."/>
            <person name="Wedler H."/>
            <person name="Ridley P."/>
            <person name="Langham S.-A."/>
            <person name="McCullagh B."/>
            <person name="Bilham L."/>
            <person name="Robben J."/>
            <person name="van der Schueren J."/>
            <person name="Grymonprez B."/>
            <person name="Chuang Y.-J."/>
            <person name="Vandenbussche F."/>
            <person name="Braeken M."/>
            <person name="Weltjens I."/>
            <person name="Voet M."/>
            <person name="Bastiaens I."/>
            <person name="Aert R."/>
            <person name="Defoor E."/>
            <person name="Weitzenegger T."/>
            <person name="Bothe G."/>
            <person name="Ramsperger U."/>
            <person name="Hilbert H."/>
            <person name="Braun M."/>
            <person name="Holzer E."/>
            <person name="Brandt A."/>
            <person name="Peters S."/>
            <person name="van Staveren M."/>
            <person name="Dirkse W."/>
            <person name="Mooijman P."/>
            <person name="Klein Lankhorst R."/>
            <person name="Rose M."/>
            <person name="Hauf J."/>
            <person name="Koetter P."/>
            <person name="Berneiser S."/>
            <person name="Hempel S."/>
            <person name="Feldpausch M."/>
            <person name="Lamberth S."/>
            <person name="Van den Daele H."/>
            <person name="De Keyser A."/>
            <person name="Buysshaert C."/>
            <person name="Gielen J."/>
            <person name="Villarroel R."/>
            <person name="De Clercq R."/>
            <person name="van Montagu M."/>
            <person name="Rogers J."/>
            <person name="Cronin A."/>
            <person name="Quail M.A."/>
            <person name="Bray-Allen S."/>
            <person name="Clark L."/>
            <person name="Doggett J."/>
            <person name="Hall S."/>
            <person name="Kay M."/>
            <person name="Lennard N."/>
            <person name="McLay K."/>
            <person name="Mayes R."/>
            <person name="Pettett A."/>
            <person name="Rajandream M.A."/>
            <person name="Lyne M."/>
            <person name="Benes V."/>
            <person name="Rechmann S."/>
            <person name="Borkova D."/>
            <person name="Bloecker H."/>
            <person name="Scharfe M."/>
            <person name="Grimm M."/>
            <person name="Loehnert T.-H."/>
            <person name="Dose S."/>
            <person name="de Haan M."/>
            <person name="Maarse A.C."/>
            <person name="Schaefer M."/>
            <person name="Mueller-Auer S."/>
            <person name="Gabel C."/>
            <person name="Fuchs M."/>
            <person name="Fartmann B."/>
            <person name="Granderath K."/>
            <person name="Dauner D."/>
            <person name="Herzl A."/>
            <person name="Neumann S."/>
            <person name="Argiriou A."/>
            <person name="Vitale D."/>
            <person name="Liguori R."/>
            <person name="Piravandi E."/>
            <person name="Massenet O."/>
            <person name="Quigley F."/>
            <person name="Clabauld G."/>
            <person name="Muendlein A."/>
            <person name="Felber R."/>
            <person name="Schnabl S."/>
            <person name="Hiller R."/>
            <person name="Schmidt W."/>
            <person name="Lecharny A."/>
            <person name="Aubourg S."/>
            <person name="Chefdor F."/>
            <person name="Cooke R."/>
            <person name="Berger C."/>
            <person name="Monfort A."/>
            <person name="Casacuberta E."/>
            <person name="Gibbons T."/>
            <person name="Weber N."/>
            <person name="Vandenbol M."/>
            <person name="Bargues M."/>
            <person name="Terol J."/>
            <person name="Torres A."/>
            <person name="Perez-Perez A."/>
            <person name="Purnelle B."/>
            <person name="Bent E."/>
            <person name="Johnson S."/>
            <person name="Tacon D."/>
            <person name="Jesse T."/>
            <person name="Heijnen L."/>
            <person name="Schwarz S."/>
            <person name="Scholler P."/>
            <person name="Heber S."/>
            <person name="Francs P."/>
            <person name="Bielke C."/>
            <person name="Frishman D."/>
            <person name="Haase D."/>
            <person name="Lemcke K."/>
            <person name="Mewes H.-W."/>
            <person name="Stocker S."/>
            <person name="Zaccaria P."/>
            <person name="Bevan M."/>
            <person name="Wilson R.K."/>
            <person name="de la Bastide M."/>
            <person name="Habermann K."/>
            <person name="Parnell L."/>
            <person name="Dedhia N."/>
            <person name="Gnoj L."/>
            <person name="Schutz K."/>
            <person name="Huang E."/>
            <person name="Spiegel L."/>
            <person name="Sekhon M."/>
            <person name="Murray J."/>
            <person name="Sheet P."/>
            <person name="Cordes M."/>
            <person name="Abu-Threideh J."/>
            <person name="Stoneking T."/>
            <person name="Kalicki J."/>
            <person name="Graves T."/>
            <person name="Harmon G."/>
            <person name="Edwards J."/>
            <person name="Latreille P."/>
            <person name="Courtney L."/>
            <person name="Cloud J."/>
            <person name="Abbott A."/>
            <person name="Scott K."/>
            <person name="Johnson D."/>
            <person name="Minx P."/>
            <person name="Bentley D."/>
            <person name="Fulton B."/>
            <person name="Miller N."/>
            <person name="Greco T."/>
            <person name="Kemp K."/>
            <person name="Kramer J."/>
            <person name="Fulton L."/>
            <person name="Mardis E."/>
            <person name="Dante M."/>
            <person name="Pepin K."/>
            <person name="Hillier L.W."/>
            <person name="Nelson J."/>
            <person name="Spieth J."/>
            <person name="Ryan E."/>
            <person name="Andrews S."/>
            <person name="Geisel C."/>
            <person name="Layman D."/>
            <person name="Du H."/>
            <person name="Ali J."/>
            <person name="Berghoff A."/>
            <person name="Jones K."/>
            <person name="Drone K."/>
            <person name="Cotton M."/>
            <person name="Joshu C."/>
            <person name="Antonoiu B."/>
            <person name="Zidanic M."/>
            <person name="Strong C."/>
            <person name="Sun H."/>
            <person name="Lamar B."/>
            <person name="Yordan C."/>
            <person name="Ma P."/>
            <person name="Zhong J."/>
            <person name="Preston R."/>
            <person name="Vil D."/>
            <person name="Shekher M."/>
            <person name="Matero A."/>
            <person name="Shah R."/>
            <person name="Swaby I.K."/>
            <person name="O'Shaughnessy A."/>
            <person name="Rodriguez M."/>
            <person name="Hoffman J."/>
            <person name="Till S."/>
            <person name="Granat S."/>
            <person name="Shohdy N."/>
            <person name="Hasegawa A."/>
            <person name="Hameed A."/>
            <person name="Lodhi M."/>
            <person name="Johnson A."/>
            <person name="Chen E."/>
            <person name="Marra M.A."/>
            <person name="Martienssen R."/>
            <person name="McCombie W.R."/>
        </authorList>
    </citation>
    <scope>NUCLEOTIDE SEQUENCE [LARGE SCALE GENOMIC DNA]</scope>
    <source>
        <strain>cv. Columbia</strain>
    </source>
</reference>
<reference key="4">
    <citation type="journal article" date="2017" name="Plant J.">
        <title>Araport11: a complete reannotation of the Arabidopsis thaliana reference genome.</title>
        <authorList>
            <person name="Cheng C.Y."/>
            <person name="Krishnakumar V."/>
            <person name="Chan A.P."/>
            <person name="Thibaud-Nissen F."/>
            <person name="Schobel S."/>
            <person name="Town C.D."/>
        </authorList>
    </citation>
    <scope>GENOME REANNOTATION</scope>
    <source>
        <strain>cv. Columbia</strain>
    </source>
</reference>
<reference key="5">
    <citation type="journal article" date="2003" name="Science">
        <title>Empirical analysis of transcriptional activity in the Arabidopsis genome.</title>
        <authorList>
            <person name="Yamada K."/>
            <person name="Lim J."/>
            <person name="Dale J.M."/>
            <person name="Chen H."/>
            <person name="Shinn P."/>
            <person name="Palm C.J."/>
            <person name="Southwick A.M."/>
            <person name="Wu H.C."/>
            <person name="Kim C.J."/>
            <person name="Nguyen M."/>
            <person name="Pham P.K."/>
            <person name="Cheuk R.F."/>
            <person name="Karlin-Newmann G."/>
            <person name="Liu S.X."/>
            <person name="Lam B."/>
            <person name="Sakano H."/>
            <person name="Wu T."/>
            <person name="Yu G."/>
            <person name="Miranda M."/>
            <person name="Quach H.L."/>
            <person name="Tripp M."/>
            <person name="Chang C.H."/>
            <person name="Lee J.M."/>
            <person name="Toriumi M.J."/>
            <person name="Chan M.M."/>
            <person name="Tang C.C."/>
            <person name="Onodera C.S."/>
            <person name="Deng J.M."/>
            <person name="Akiyama K."/>
            <person name="Ansari Y."/>
            <person name="Arakawa T."/>
            <person name="Banh J."/>
            <person name="Banno F."/>
            <person name="Bowser L."/>
            <person name="Brooks S.Y."/>
            <person name="Carninci P."/>
            <person name="Chao Q."/>
            <person name="Choy N."/>
            <person name="Enju A."/>
            <person name="Goldsmith A.D."/>
            <person name="Gurjal M."/>
            <person name="Hansen N.F."/>
            <person name="Hayashizaki Y."/>
            <person name="Johnson-Hopson C."/>
            <person name="Hsuan V.W."/>
            <person name="Iida K."/>
            <person name="Karnes M."/>
            <person name="Khan S."/>
            <person name="Koesema E."/>
            <person name="Ishida J."/>
            <person name="Jiang P.X."/>
            <person name="Jones T."/>
            <person name="Kawai J."/>
            <person name="Kamiya A."/>
            <person name="Meyers C."/>
            <person name="Nakajima M."/>
            <person name="Narusaka M."/>
            <person name="Seki M."/>
            <person name="Sakurai T."/>
            <person name="Satou M."/>
            <person name="Tamse R."/>
            <person name="Vaysberg M."/>
            <person name="Wallender E.K."/>
            <person name="Wong C."/>
            <person name="Yamamura Y."/>
            <person name="Yuan S."/>
            <person name="Shinozaki K."/>
            <person name="Davis R.W."/>
            <person name="Theologis A."/>
            <person name="Ecker J.R."/>
        </authorList>
    </citation>
    <scope>NUCLEOTIDE SEQUENCE [LARGE SCALE MRNA]</scope>
    <source>
        <strain>cv. Columbia</strain>
    </source>
</reference>
<reference key="6">
    <citation type="journal article" date="2003" name="Plant Mol. Biol.">
        <title>Isolation, sequence analysis, and expression studies of florally expressed cDNAs in Arabidopsis.</title>
        <authorList>
            <person name="Hu W."/>
            <person name="Wang Y."/>
            <person name="Bowers C."/>
            <person name="Ma H."/>
        </authorList>
    </citation>
    <scope>TISSUE SPECIFICITY</scope>
</reference>
<dbReference type="EC" id="2.7.11.1" evidence="9"/>
<dbReference type="EMBL" id="U12857">
    <property type="protein sequence ID" value="AAA50233.1"/>
    <property type="status" value="ALT_FRAME"/>
    <property type="molecule type" value="mRNA"/>
</dbReference>
<dbReference type="EMBL" id="AY943842">
    <property type="protein sequence ID" value="AAY24532.1"/>
    <property type="molecule type" value="mRNA"/>
</dbReference>
<dbReference type="EMBL" id="AL049483">
    <property type="protein sequence ID" value="CAB39675.1"/>
    <property type="molecule type" value="Genomic_DNA"/>
</dbReference>
<dbReference type="EMBL" id="AL161564">
    <property type="protein sequence ID" value="CAB79465.1"/>
    <property type="molecule type" value="Genomic_DNA"/>
</dbReference>
<dbReference type="EMBL" id="CP002687">
    <property type="protein sequence ID" value="AEE85157.1"/>
    <property type="molecule type" value="Genomic_DNA"/>
</dbReference>
<dbReference type="EMBL" id="AY050784">
    <property type="protein sequence ID" value="AAK92719.1"/>
    <property type="molecule type" value="mRNA"/>
</dbReference>
<dbReference type="EMBL" id="AY091299">
    <property type="protein sequence ID" value="AAM14238.1"/>
    <property type="molecule type" value="mRNA"/>
</dbReference>
<dbReference type="PIR" id="T04265">
    <property type="entry name" value="T04265"/>
</dbReference>
<dbReference type="RefSeq" id="NP_194340.1">
    <property type="nucleotide sequence ID" value="NM_118743.3"/>
</dbReference>
<dbReference type="SMR" id="P42158"/>
<dbReference type="BioGRID" id="14003">
    <property type="interactions" value="6"/>
</dbReference>
<dbReference type="FunCoup" id="P42158">
    <property type="interactions" value="4368"/>
</dbReference>
<dbReference type="IntAct" id="P42158">
    <property type="interactions" value="3"/>
</dbReference>
<dbReference type="STRING" id="3702.P42158"/>
<dbReference type="iPTMnet" id="P42158"/>
<dbReference type="PaxDb" id="3702-AT4G26100.1"/>
<dbReference type="ProteomicsDB" id="246813"/>
<dbReference type="EnsemblPlants" id="AT4G26100.1">
    <property type="protein sequence ID" value="AT4G26100.1"/>
    <property type="gene ID" value="AT4G26100"/>
</dbReference>
<dbReference type="GeneID" id="828716"/>
<dbReference type="Gramene" id="AT4G26100.1">
    <property type="protein sequence ID" value="AT4G26100.1"/>
    <property type="gene ID" value="AT4G26100"/>
</dbReference>
<dbReference type="KEGG" id="ath:AT4G26100"/>
<dbReference type="Araport" id="AT4G26100"/>
<dbReference type="TAIR" id="AT4G26100">
    <property type="gene designation" value="CK1"/>
</dbReference>
<dbReference type="eggNOG" id="KOG1164">
    <property type="taxonomic scope" value="Eukaryota"/>
</dbReference>
<dbReference type="HOGENOM" id="CLU_019279_0_0_1"/>
<dbReference type="InParanoid" id="P42158"/>
<dbReference type="OMA" id="HDSKTRQ"/>
<dbReference type="OrthoDB" id="5800476at2759"/>
<dbReference type="PhylomeDB" id="P42158"/>
<dbReference type="BRENDA" id="2.7.11.1">
    <property type="organism ID" value="399"/>
</dbReference>
<dbReference type="PRO" id="PR:P42158"/>
<dbReference type="Proteomes" id="UP000006548">
    <property type="component" value="Chromosome 4"/>
</dbReference>
<dbReference type="ExpressionAtlas" id="P42158">
    <property type="expression patterns" value="baseline and differential"/>
</dbReference>
<dbReference type="GO" id="GO:0005737">
    <property type="term" value="C:cytoplasm"/>
    <property type="evidence" value="ECO:0007669"/>
    <property type="project" value="UniProtKB-SubCell"/>
</dbReference>
<dbReference type="GO" id="GO:0009506">
    <property type="term" value="C:plasmodesma"/>
    <property type="evidence" value="ECO:0000314"/>
    <property type="project" value="TAIR"/>
</dbReference>
<dbReference type="GO" id="GO:0005524">
    <property type="term" value="F:ATP binding"/>
    <property type="evidence" value="ECO:0007669"/>
    <property type="project" value="UniProtKB-KW"/>
</dbReference>
<dbReference type="GO" id="GO:0106310">
    <property type="term" value="F:protein serine kinase activity"/>
    <property type="evidence" value="ECO:0007669"/>
    <property type="project" value="RHEA"/>
</dbReference>
<dbReference type="GO" id="GO:0004674">
    <property type="term" value="F:protein serine/threonine kinase activity"/>
    <property type="evidence" value="ECO:0007669"/>
    <property type="project" value="UniProtKB-KW"/>
</dbReference>
<dbReference type="CDD" id="cd14125">
    <property type="entry name" value="STKc_CK1_delta_epsilon"/>
    <property type="match status" value="1"/>
</dbReference>
<dbReference type="FunFam" id="1.10.510.10:FF:000134">
    <property type="entry name" value="Casein kinase I isoform delta-like"/>
    <property type="match status" value="1"/>
</dbReference>
<dbReference type="FunFam" id="3.30.200.20:FF:000538">
    <property type="entry name" value="Putative Casein kinase I"/>
    <property type="match status" value="1"/>
</dbReference>
<dbReference type="Gene3D" id="1.10.510.10">
    <property type="entry name" value="Transferase(Phosphotransferase) domain 1"/>
    <property type="match status" value="1"/>
</dbReference>
<dbReference type="InterPro" id="IPR050235">
    <property type="entry name" value="CK1_Ser-Thr_kinase"/>
</dbReference>
<dbReference type="InterPro" id="IPR011009">
    <property type="entry name" value="Kinase-like_dom_sf"/>
</dbReference>
<dbReference type="InterPro" id="IPR000719">
    <property type="entry name" value="Prot_kinase_dom"/>
</dbReference>
<dbReference type="InterPro" id="IPR017441">
    <property type="entry name" value="Protein_kinase_ATP_BS"/>
</dbReference>
<dbReference type="InterPro" id="IPR008271">
    <property type="entry name" value="Ser/Thr_kinase_AS"/>
</dbReference>
<dbReference type="PANTHER" id="PTHR11909">
    <property type="entry name" value="CASEIN KINASE-RELATED"/>
    <property type="match status" value="1"/>
</dbReference>
<dbReference type="Pfam" id="PF00069">
    <property type="entry name" value="Pkinase"/>
    <property type="match status" value="1"/>
</dbReference>
<dbReference type="SMART" id="SM00220">
    <property type="entry name" value="S_TKc"/>
    <property type="match status" value="1"/>
</dbReference>
<dbReference type="SUPFAM" id="SSF56112">
    <property type="entry name" value="Protein kinase-like (PK-like)"/>
    <property type="match status" value="1"/>
</dbReference>
<dbReference type="PROSITE" id="PS00107">
    <property type="entry name" value="PROTEIN_KINASE_ATP"/>
    <property type="match status" value="1"/>
</dbReference>
<dbReference type="PROSITE" id="PS50011">
    <property type="entry name" value="PROTEIN_KINASE_DOM"/>
    <property type="match status" value="1"/>
</dbReference>
<dbReference type="PROSITE" id="PS00108">
    <property type="entry name" value="PROTEIN_KINASE_ST"/>
    <property type="match status" value="1"/>
</dbReference>
<proteinExistence type="evidence at transcript level"/>